<proteinExistence type="inferred from homology"/>
<organism>
    <name type="scientific">Crucihimalaya wallichii</name>
    <name type="common">Rock-cress</name>
    <name type="synonym">Arabidopsis campestris</name>
    <dbReference type="NCBI Taxonomy" id="78192"/>
    <lineage>
        <taxon>Eukaryota</taxon>
        <taxon>Viridiplantae</taxon>
        <taxon>Streptophyta</taxon>
        <taxon>Embryophyta</taxon>
        <taxon>Tracheophyta</taxon>
        <taxon>Spermatophyta</taxon>
        <taxon>Magnoliopsida</taxon>
        <taxon>eudicotyledons</taxon>
        <taxon>Gunneridae</taxon>
        <taxon>Pentapetalae</taxon>
        <taxon>rosids</taxon>
        <taxon>malvids</taxon>
        <taxon>Brassicales</taxon>
        <taxon>Brassicaceae</taxon>
        <taxon>Crucihimalayeae</taxon>
        <taxon>Crucihimalaya</taxon>
    </lineage>
</organism>
<comment type="subcellular location">
    <subcellularLocation>
        <location>Plastid</location>
        <location>Chloroplast</location>
    </subcellularLocation>
</comment>
<comment type="similarity">
    <text evidence="1">Belongs to the universal ribosomal protein uS2 family.</text>
</comment>
<protein>
    <recommendedName>
        <fullName evidence="1">Small ribosomal subunit protein uS2c</fullName>
    </recommendedName>
    <alternativeName>
        <fullName>30S ribosomal protein S2, chloroplastic</fullName>
    </alternativeName>
</protein>
<feature type="chain" id="PRO_0000352104" description="Small ribosomal subunit protein uS2c">
    <location>
        <begin position="1"/>
        <end position="236"/>
    </location>
</feature>
<dbReference type="EMBL" id="AP009372">
    <property type="protein sequence ID" value="BAF50275.1"/>
    <property type="molecule type" value="Genomic_DNA"/>
</dbReference>
<dbReference type="RefSeq" id="YP_001123451.1">
    <property type="nucleotide sequence ID" value="NC_009271.1"/>
</dbReference>
<dbReference type="SMR" id="A4QKS0"/>
<dbReference type="GeneID" id="4962636"/>
<dbReference type="GO" id="GO:0009507">
    <property type="term" value="C:chloroplast"/>
    <property type="evidence" value="ECO:0007669"/>
    <property type="project" value="UniProtKB-SubCell"/>
</dbReference>
<dbReference type="GO" id="GO:0005763">
    <property type="term" value="C:mitochondrial small ribosomal subunit"/>
    <property type="evidence" value="ECO:0007669"/>
    <property type="project" value="TreeGrafter"/>
</dbReference>
<dbReference type="GO" id="GO:0003735">
    <property type="term" value="F:structural constituent of ribosome"/>
    <property type="evidence" value="ECO:0007669"/>
    <property type="project" value="InterPro"/>
</dbReference>
<dbReference type="GO" id="GO:0006412">
    <property type="term" value="P:translation"/>
    <property type="evidence" value="ECO:0007669"/>
    <property type="project" value="UniProtKB-UniRule"/>
</dbReference>
<dbReference type="CDD" id="cd01425">
    <property type="entry name" value="RPS2"/>
    <property type="match status" value="1"/>
</dbReference>
<dbReference type="FunFam" id="3.40.50.10490:FF:000101">
    <property type="match status" value="1"/>
</dbReference>
<dbReference type="FunFam" id="1.10.287.610:FF:000001">
    <property type="entry name" value="30S ribosomal protein S2"/>
    <property type="match status" value="1"/>
</dbReference>
<dbReference type="Gene3D" id="3.40.50.10490">
    <property type="entry name" value="Glucose-6-phosphate isomerase like protein, domain 1"/>
    <property type="match status" value="1"/>
</dbReference>
<dbReference type="Gene3D" id="1.10.287.610">
    <property type="entry name" value="Helix hairpin bin"/>
    <property type="match status" value="1"/>
</dbReference>
<dbReference type="HAMAP" id="MF_00291_B">
    <property type="entry name" value="Ribosomal_uS2_B"/>
    <property type="match status" value="1"/>
</dbReference>
<dbReference type="InterPro" id="IPR001865">
    <property type="entry name" value="Ribosomal_uS2"/>
</dbReference>
<dbReference type="InterPro" id="IPR005706">
    <property type="entry name" value="Ribosomal_uS2_bac/mit/plastid"/>
</dbReference>
<dbReference type="InterPro" id="IPR018130">
    <property type="entry name" value="Ribosomal_uS2_CS"/>
</dbReference>
<dbReference type="InterPro" id="IPR023591">
    <property type="entry name" value="Ribosomal_uS2_flav_dom_sf"/>
</dbReference>
<dbReference type="NCBIfam" id="TIGR01011">
    <property type="entry name" value="rpsB_bact"/>
    <property type="match status" value="1"/>
</dbReference>
<dbReference type="PANTHER" id="PTHR12534">
    <property type="entry name" value="30S RIBOSOMAL PROTEIN S2 PROKARYOTIC AND ORGANELLAR"/>
    <property type="match status" value="1"/>
</dbReference>
<dbReference type="PANTHER" id="PTHR12534:SF0">
    <property type="entry name" value="SMALL RIBOSOMAL SUBUNIT PROTEIN US2M"/>
    <property type="match status" value="1"/>
</dbReference>
<dbReference type="Pfam" id="PF00318">
    <property type="entry name" value="Ribosomal_S2"/>
    <property type="match status" value="1"/>
</dbReference>
<dbReference type="PRINTS" id="PR00395">
    <property type="entry name" value="RIBOSOMALS2"/>
</dbReference>
<dbReference type="SUPFAM" id="SSF52313">
    <property type="entry name" value="Ribosomal protein S2"/>
    <property type="match status" value="1"/>
</dbReference>
<dbReference type="PROSITE" id="PS00962">
    <property type="entry name" value="RIBOSOMAL_S2_1"/>
    <property type="match status" value="1"/>
</dbReference>
<dbReference type="PROSITE" id="PS00963">
    <property type="entry name" value="RIBOSOMAL_S2_2"/>
    <property type="match status" value="1"/>
</dbReference>
<reference key="1">
    <citation type="submission" date="2007-03" db="EMBL/GenBank/DDBJ databases">
        <title>Sequencing analysis of Crucihimalaya wallichii chloroplast DNA.</title>
        <authorList>
            <person name="Hosouchi T."/>
            <person name="Tsuruoka H."/>
            <person name="Kotani H."/>
        </authorList>
    </citation>
    <scope>NUCLEOTIDE SEQUENCE [LARGE SCALE GENOMIC DNA]</scope>
</reference>
<sequence>MTKRYWNIDLEEMMRAGVHFGHGTRKWNPRMAPYISAKRKGIHIINLTRTARFLSEACDLVFDAASRGKQFLIVGTKNKAADLVSRAAIRARCHYVNKKWLGGMLTNWSTTEKRLHKFRDLRTEQKTEGFNRLPKRDAAVLKRQLSRLETYLGGIKYMTGLPDIVIIIDQQEEYTALRECITLGIPTISLIDTNCNPDLADISIPANDDAIASIRFILNKLVFAICEGRSSYIQNS</sequence>
<evidence type="ECO:0000305" key="1"/>
<geneLocation type="chloroplast"/>
<gene>
    <name type="primary">rps2</name>
</gene>
<name>RR2_CRUWA</name>
<accession>A4QKS0</accession>
<keyword id="KW-0150">Chloroplast</keyword>
<keyword id="KW-0934">Plastid</keyword>
<keyword id="KW-0687">Ribonucleoprotein</keyword>
<keyword id="KW-0689">Ribosomal protein</keyword>